<accession>Q1XDT9</accession>
<protein>
    <recommendedName>
        <fullName evidence="2">Acetyl-coenzyme A carboxylase carboxyl transferase subunit beta, chloroplastic</fullName>
        <shortName evidence="2">ACCase subunit beta</shortName>
        <shortName evidence="2">Acetyl-CoA carboxylase carboxyltransferase subunit beta</shortName>
        <ecNumber evidence="2">2.1.3.15</ecNumber>
    </recommendedName>
</protein>
<reference key="1">
    <citation type="submission" date="2003-11" db="EMBL/GenBank/DDBJ databases">
        <title>Whole genome sequence of Porphyra yezoensis chloroplast.</title>
        <authorList>
            <person name="Kunimoto M."/>
            <person name="Morishima K."/>
            <person name="Yoshikawa M."/>
            <person name="Fukuda S."/>
            <person name="Kobayashi T."/>
            <person name="Kobayashi M."/>
            <person name="Okazaki T."/>
            <person name="Ohara I."/>
            <person name="Nakayama I."/>
        </authorList>
    </citation>
    <scope>NUCLEOTIDE SEQUENCE [LARGE SCALE GENOMIC DNA]</scope>
    <source>
        <strain>U-51</strain>
    </source>
</reference>
<dbReference type="EC" id="2.1.3.15" evidence="2"/>
<dbReference type="EMBL" id="AP006715">
    <property type="protein sequence ID" value="BAE92322.1"/>
    <property type="molecule type" value="Genomic_DNA"/>
</dbReference>
<dbReference type="RefSeq" id="YP_536879.1">
    <property type="nucleotide sequence ID" value="NC_007932.1"/>
</dbReference>
<dbReference type="SMR" id="Q1XDT9"/>
<dbReference type="GeneID" id="3978961"/>
<dbReference type="UniPathway" id="UPA00655">
    <property type="reaction ID" value="UER00711"/>
</dbReference>
<dbReference type="GO" id="GO:0009317">
    <property type="term" value="C:acetyl-CoA carboxylase complex"/>
    <property type="evidence" value="ECO:0007669"/>
    <property type="project" value="InterPro"/>
</dbReference>
<dbReference type="GO" id="GO:0009570">
    <property type="term" value="C:chloroplast stroma"/>
    <property type="evidence" value="ECO:0007669"/>
    <property type="project" value="UniProtKB-SubCell"/>
</dbReference>
<dbReference type="GO" id="GO:0003989">
    <property type="term" value="F:acetyl-CoA carboxylase activity"/>
    <property type="evidence" value="ECO:0007669"/>
    <property type="project" value="InterPro"/>
</dbReference>
<dbReference type="GO" id="GO:0005524">
    <property type="term" value="F:ATP binding"/>
    <property type="evidence" value="ECO:0007669"/>
    <property type="project" value="UniProtKB-KW"/>
</dbReference>
<dbReference type="GO" id="GO:0016743">
    <property type="term" value="F:carboxyl- or carbamoyltransferase activity"/>
    <property type="evidence" value="ECO:0007669"/>
    <property type="project" value="UniProtKB-UniRule"/>
</dbReference>
<dbReference type="GO" id="GO:0008270">
    <property type="term" value="F:zinc ion binding"/>
    <property type="evidence" value="ECO:0007669"/>
    <property type="project" value="UniProtKB-UniRule"/>
</dbReference>
<dbReference type="GO" id="GO:0006633">
    <property type="term" value="P:fatty acid biosynthetic process"/>
    <property type="evidence" value="ECO:0007669"/>
    <property type="project" value="UniProtKB-KW"/>
</dbReference>
<dbReference type="GO" id="GO:2001295">
    <property type="term" value="P:malonyl-CoA biosynthetic process"/>
    <property type="evidence" value="ECO:0007669"/>
    <property type="project" value="UniProtKB-UniRule"/>
</dbReference>
<dbReference type="Gene3D" id="3.90.226.10">
    <property type="entry name" value="2-enoyl-CoA Hydratase, Chain A, domain 1"/>
    <property type="match status" value="1"/>
</dbReference>
<dbReference type="HAMAP" id="MF_01395">
    <property type="entry name" value="AcetylCoA_CT_beta"/>
    <property type="match status" value="1"/>
</dbReference>
<dbReference type="InterPro" id="IPR034733">
    <property type="entry name" value="AcCoA_carboxyl_beta"/>
</dbReference>
<dbReference type="InterPro" id="IPR000438">
    <property type="entry name" value="Acetyl_CoA_COase_Trfase_b_su"/>
</dbReference>
<dbReference type="InterPro" id="IPR029045">
    <property type="entry name" value="ClpP/crotonase-like_dom_sf"/>
</dbReference>
<dbReference type="InterPro" id="IPR011762">
    <property type="entry name" value="COA_CT_N"/>
</dbReference>
<dbReference type="InterPro" id="IPR041010">
    <property type="entry name" value="Znf-ACC"/>
</dbReference>
<dbReference type="NCBIfam" id="TIGR00515">
    <property type="entry name" value="accD"/>
    <property type="match status" value="1"/>
</dbReference>
<dbReference type="PANTHER" id="PTHR42995">
    <property type="entry name" value="ACETYL-COENZYME A CARBOXYLASE CARBOXYL TRANSFERASE SUBUNIT BETA, CHLOROPLASTIC"/>
    <property type="match status" value="1"/>
</dbReference>
<dbReference type="PANTHER" id="PTHR42995:SF5">
    <property type="entry name" value="ACETYL-COENZYME A CARBOXYLASE CARBOXYL TRANSFERASE SUBUNIT BETA, CHLOROPLASTIC"/>
    <property type="match status" value="1"/>
</dbReference>
<dbReference type="Pfam" id="PF01039">
    <property type="entry name" value="Carboxyl_trans"/>
    <property type="match status" value="1"/>
</dbReference>
<dbReference type="Pfam" id="PF17848">
    <property type="entry name" value="Zn_ribbon_ACC"/>
    <property type="match status" value="1"/>
</dbReference>
<dbReference type="PRINTS" id="PR01070">
    <property type="entry name" value="ACCCTRFRASEB"/>
</dbReference>
<dbReference type="SUPFAM" id="SSF52096">
    <property type="entry name" value="ClpP/crotonase"/>
    <property type="match status" value="1"/>
</dbReference>
<dbReference type="PROSITE" id="PS50980">
    <property type="entry name" value="COA_CT_NTER"/>
    <property type="match status" value="1"/>
</dbReference>
<geneLocation type="chloroplast"/>
<proteinExistence type="inferred from homology"/>
<name>ACCD_PYRYE</name>
<feature type="chain" id="PRO_0000277290" description="Acetyl-coenzyme A carboxylase carboxyl transferase subunit beta, chloroplastic">
    <location>
        <begin position="1"/>
        <end position="288"/>
    </location>
</feature>
<feature type="domain" description="CoA carboxyltransferase N-terminal" evidence="3">
    <location>
        <begin position="30"/>
        <end position="288"/>
    </location>
</feature>
<feature type="zinc finger region" description="C4-type" evidence="2">
    <location>
        <begin position="34"/>
        <end position="56"/>
    </location>
</feature>
<feature type="binding site" evidence="2">
    <location>
        <position position="34"/>
    </location>
    <ligand>
        <name>Zn(2+)</name>
        <dbReference type="ChEBI" id="CHEBI:29105"/>
    </ligand>
</feature>
<feature type="binding site" evidence="2">
    <location>
        <position position="37"/>
    </location>
    <ligand>
        <name>Zn(2+)</name>
        <dbReference type="ChEBI" id="CHEBI:29105"/>
    </ligand>
</feature>
<feature type="binding site" evidence="2">
    <location>
        <position position="53"/>
    </location>
    <ligand>
        <name>Zn(2+)</name>
        <dbReference type="ChEBI" id="CHEBI:29105"/>
    </ligand>
</feature>
<feature type="binding site" evidence="2">
    <location>
        <position position="56"/>
    </location>
    <ligand>
        <name>Zn(2+)</name>
        <dbReference type="ChEBI" id="CHEBI:29105"/>
    </ligand>
</feature>
<comment type="function">
    <text evidence="2">Component of the acetyl coenzyme A carboxylase (ACC) complex. Biotin carboxylase (BC) catalyzes the carboxylation of biotin on its carrier protein (BCCP) and then the CO(2) group is transferred by the transcarboxylase to acetyl-CoA to form malonyl-CoA.</text>
</comment>
<comment type="catalytic activity">
    <reaction evidence="2">
        <text>N(6)-carboxybiotinyl-L-lysyl-[protein] + acetyl-CoA = N(6)-biotinyl-L-lysyl-[protein] + malonyl-CoA</text>
        <dbReference type="Rhea" id="RHEA:54728"/>
        <dbReference type="Rhea" id="RHEA-COMP:10505"/>
        <dbReference type="Rhea" id="RHEA-COMP:10506"/>
        <dbReference type="ChEBI" id="CHEBI:57288"/>
        <dbReference type="ChEBI" id="CHEBI:57384"/>
        <dbReference type="ChEBI" id="CHEBI:83144"/>
        <dbReference type="ChEBI" id="CHEBI:83145"/>
        <dbReference type="EC" id="2.1.3.15"/>
    </reaction>
</comment>
<comment type="cofactor">
    <cofactor evidence="2">
        <name>Zn(2+)</name>
        <dbReference type="ChEBI" id="CHEBI:29105"/>
    </cofactor>
    <text evidence="2">Binds 1 zinc ion per subunit.</text>
</comment>
<comment type="pathway">
    <text evidence="2">Lipid metabolism; malonyl-CoA biosynthesis; malonyl-CoA from acetyl-CoA: step 1/1.</text>
</comment>
<comment type="subunit">
    <text evidence="1">Acetyl-CoA carboxylase is a heterohexamer composed of biotin carboxyl carrier protein, biotin carboxylase and 2 subunits each of ACCase subunit alpha and ACCase plastid-coded subunit beta (accD).</text>
</comment>
<comment type="subcellular location">
    <subcellularLocation>
        <location evidence="2">Plastid</location>
        <location evidence="2">Chloroplast stroma</location>
    </subcellularLocation>
</comment>
<comment type="similarity">
    <text evidence="2">Belongs to the AccD/PCCB family.</text>
</comment>
<gene>
    <name evidence="2" type="primary">accD</name>
</gene>
<keyword id="KW-0067">ATP-binding</keyword>
<keyword id="KW-0150">Chloroplast</keyword>
<keyword id="KW-0275">Fatty acid biosynthesis</keyword>
<keyword id="KW-0276">Fatty acid metabolism</keyword>
<keyword id="KW-0444">Lipid biosynthesis</keyword>
<keyword id="KW-0443">Lipid metabolism</keyword>
<keyword id="KW-0479">Metal-binding</keyword>
<keyword id="KW-0547">Nucleotide-binding</keyword>
<keyword id="KW-0934">Plastid</keyword>
<keyword id="KW-0808">Transferase</keyword>
<keyword id="KW-0862">Zinc</keyword>
<keyword id="KW-0863">Zinc-finger</keyword>
<organism>
    <name type="scientific">Pyropia yezoensis</name>
    <name type="common">Susabi-nori</name>
    <name type="synonym">Porphyra yezoensis</name>
    <dbReference type="NCBI Taxonomy" id="2788"/>
    <lineage>
        <taxon>Eukaryota</taxon>
        <taxon>Rhodophyta</taxon>
        <taxon>Bangiophyceae</taxon>
        <taxon>Bangiales</taxon>
        <taxon>Bangiaceae</taxon>
        <taxon>Pyropia</taxon>
    </lineage>
</organism>
<evidence type="ECO:0000250" key="1"/>
<evidence type="ECO:0000255" key="2">
    <source>
        <dbReference type="HAMAP-Rule" id="MF_01395"/>
    </source>
</evidence>
<evidence type="ECO:0000255" key="3">
    <source>
        <dbReference type="PROSITE-ProRule" id="PRU01136"/>
    </source>
</evidence>
<sequence>MSLSNWPLKKENSEAYNIKNSKQITIPDGLWIKCFDCGLLMYSKVLKRNLKVCPQCSYHFQASSNERIDQLIDQGSWQPMDVHLISTDPLGFKDQKLYSQRLKDTAFKTGLQDAVQTGTGTMQGKKVCLGIMDFRFMGGSMGSVVGEKLTRLLEKATQEKLPAIILCASGGARMQEGMLSLMQMAKISSALEMHKKENLLYISVLTSPTTGGVTASFAMLGDLIIAEPKALIAFAGRRVIEQTIKEDLPDNFQSSEYLFEHGFLDLIVSRTQLRSKLIQILSLHNHSK</sequence>